<reference key="1">
    <citation type="journal article" date="2003" name="Nature">
        <title>The genome sequence of Bacillus anthracis Ames and comparison to closely related bacteria.</title>
        <authorList>
            <person name="Read T.D."/>
            <person name="Peterson S.N."/>
            <person name="Tourasse N.J."/>
            <person name="Baillie L.W."/>
            <person name="Paulsen I.T."/>
            <person name="Nelson K.E."/>
            <person name="Tettelin H."/>
            <person name="Fouts D.E."/>
            <person name="Eisen J.A."/>
            <person name="Gill S.R."/>
            <person name="Holtzapple E.K."/>
            <person name="Okstad O.A."/>
            <person name="Helgason E."/>
            <person name="Rilstone J."/>
            <person name="Wu M."/>
            <person name="Kolonay J.F."/>
            <person name="Beanan M.J."/>
            <person name="Dodson R.J."/>
            <person name="Brinkac L.M."/>
            <person name="Gwinn M.L."/>
            <person name="DeBoy R.T."/>
            <person name="Madpu R."/>
            <person name="Daugherty S.C."/>
            <person name="Durkin A.S."/>
            <person name="Haft D.H."/>
            <person name="Nelson W.C."/>
            <person name="Peterson J.D."/>
            <person name="Pop M."/>
            <person name="Khouri H.M."/>
            <person name="Radune D."/>
            <person name="Benton J.L."/>
            <person name="Mahamoud Y."/>
            <person name="Jiang L."/>
            <person name="Hance I.R."/>
            <person name="Weidman J.F."/>
            <person name="Berry K.J."/>
            <person name="Plaut R.D."/>
            <person name="Wolf A.M."/>
            <person name="Watkins K.L."/>
            <person name="Nierman W.C."/>
            <person name="Hazen A."/>
            <person name="Cline R.T."/>
            <person name="Redmond C."/>
            <person name="Thwaite J.E."/>
            <person name="White O."/>
            <person name="Salzberg S.L."/>
            <person name="Thomason B."/>
            <person name="Friedlander A.M."/>
            <person name="Koehler T.M."/>
            <person name="Hanna P.C."/>
            <person name="Kolstoe A.-B."/>
            <person name="Fraser C.M."/>
        </authorList>
    </citation>
    <scope>NUCLEOTIDE SEQUENCE [LARGE SCALE GENOMIC DNA]</scope>
    <source>
        <strain>Ames / isolate Porton</strain>
    </source>
</reference>
<reference key="2">
    <citation type="journal article" date="2009" name="J. Bacteriol.">
        <title>The complete genome sequence of Bacillus anthracis Ames 'Ancestor'.</title>
        <authorList>
            <person name="Ravel J."/>
            <person name="Jiang L."/>
            <person name="Stanley S.T."/>
            <person name="Wilson M.R."/>
            <person name="Decker R.S."/>
            <person name="Read T.D."/>
            <person name="Worsham P."/>
            <person name="Keim P.S."/>
            <person name="Salzberg S.L."/>
            <person name="Fraser-Liggett C.M."/>
            <person name="Rasko D.A."/>
        </authorList>
    </citation>
    <scope>NUCLEOTIDE SEQUENCE [LARGE SCALE GENOMIC DNA]</scope>
    <source>
        <strain>Ames ancestor</strain>
    </source>
</reference>
<reference key="3">
    <citation type="submission" date="2004-01" db="EMBL/GenBank/DDBJ databases">
        <title>Complete genome sequence of Bacillus anthracis Sterne.</title>
        <authorList>
            <person name="Brettin T.S."/>
            <person name="Bruce D."/>
            <person name="Challacombe J.F."/>
            <person name="Gilna P."/>
            <person name="Han C."/>
            <person name="Hill K."/>
            <person name="Hitchcock P."/>
            <person name="Jackson P."/>
            <person name="Keim P."/>
            <person name="Longmire J."/>
            <person name="Lucas S."/>
            <person name="Okinaka R."/>
            <person name="Richardson P."/>
            <person name="Rubin E."/>
            <person name="Tice H."/>
        </authorList>
    </citation>
    <scope>NUCLEOTIDE SEQUENCE [LARGE SCALE GENOMIC DNA]</scope>
    <source>
        <strain>Sterne</strain>
    </source>
</reference>
<proteinExistence type="inferred from homology"/>
<sequence>MVRTINETFLKACRGERTDYVPAWYMRQAGRSQPEYRKIKEKYSLFEITHNPELCAYVTKLPVDQYNVDAAILYKDIMSPLPAIGVDVEIKSGIGPVIDNPIRSLQDVEKLGEINPEDDVPYILDTIRLLTTEMLDVPLIGFSGAPFTLASYMIEGGPSRNYHNTKAFMYAEPKAWFALIDKLADMVITYLKAQINAGAKAVQIFDSWVGTVNVADYRVFIKPAMERIFAEVRTMGVPMIMHGVGAAHLVNEWHDLPLDVVGLDWRLPIEEARARGVHKAVQGNMDPSFLLAPWSVIEEHVKGILDQGMKQPGYIFNLGHGVFPEVNPDTLKRLTTFIHEYSKGQLAK</sequence>
<accession>Q81U23</accession>
<accession>Q6I2A8</accession>
<accession>Q6KW39</accession>
<dbReference type="EC" id="4.1.1.37" evidence="1"/>
<dbReference type="EMBL" id="AE016879">
    <property type="protein sequence ID" value="AAP25050.1"/>
    <property type="molecule type" value="Genomic_DNA"/>
</dbReference>
<dbReference type="EMBL" id="AE017334">
    <property type="protein sequence ID" value="AAT30170.2"/>
    <property type="molecule type" value="Genomic_DNA"/>
</dbReference>
<dbReference type="EMBL" id="AE017225">
    <property type="protein sequence ID" value="AAT53323.1"/>
    <property type="molecule type" value="Genomic_DNA"/>
</dbReference>
<dbReference type="RefSeq" id="NP_843564.1">
    <property type="nucleotide sequence ID" value="NC_003997.3"/>
</dbReference>
<dbReference type="RefSeq" id="WP_000252599.1">
    <property type="nucleotide sequence ID" value="NZ_WXXJ01000044.1"/>
</dbReference>
<dbReference type="RefSeq" id="YP_027272.1">
    <property type="nucleotide sequence ID" value="NC_005945.1"/>
</dbReference>
<dbReference type="SMR" id="Q81U23"/>
<dbReference type="STRING" id="261594.GBAA_1070"/>
<dbReference type="DNASU" id="1089006"/>
<dbReference type="GeneID" id="45021098"/>
<dbReference type="KEGG" id="ban:BA_1070"/>
<dbReference type="KEGG" id="bar:GBAA_1070"/>
<dbReference type="KEGG" id="bat:BAS0999"/>
<dbReference type="PATRIC" id="fig|198094.11.peg.1057"/>
<dbReference type="eggNOG" id="COG0407">
    <property type="taxonomic scope" value="Bacteria"/>
</dbReference>
<dbReference type="HOGENOM" id="CLU_040933_0_1_9"/>
<dbReference type="OrthoDB" id="9806656at2"/>
<dbReference type="UniPathway" id="UPA00251">
    <property type="reaction ID" value="UER00321"/>
</dbReference>
<dbReference type="Proteomes" id="UP000000427">
    <property type="component" value="Chromosome"/>
</dbReference>
<dbReference type="Proteomes" id="UP000000594">
    <property type="component" value="Chromosome"/>
</dbReference>
<dbReference type="GO" id="GO:0005829">
    <property type="term" value="C:cytosol"/>
    <property type="evidence" value="ECO:0007669"/>
    <property type="project" value="TreeGrafter"/>
</dbReference>
<dbReference type="GO" id="GO:0004853">
    <property type="term" value="F:uroporphyrinogen decarboxylase activity"/>
    <property type="evidence" value="ECO:0007669"/>
    <property type="project" value="UniProtKB-UniRule"/>
</dbReference>
<dbReference type="GO" id="GO:0006782">
    <property type="term" value="P:protoporphyrinogen IX biosynthetic process"/>
    <property type="evidence" value="ECO:0007669"/>
    <property type="project" value="UniProtKB-UniRule"/>
</dbReference>
<dbReference type="CDD" id="cd00717">
    <property type="entry name" value="URO-D"/>
    <property type="match status" value="1"/>
</dbReference>
<dbReference type="FunFam" id="3.20.20.210:FF:000005">
    <property type="entry name" value="Uroporphyrinogen decarboxylase"/>
    <property type="match status" value="1"/>
</dbReference>
<dbReference type="Gene3D" id="3.20.20.210">
    <property type="match status" value="1"/>
</dbReference>
<dbReference type="HAMAP" id="MF_00218">
    <property type="entry name" value="URO_D"/>
    <property type="match status" value="1"/>
</dbReference>
<dbReference type="InterPro" id="IPR038071">
    <property type="entry name" value="UROD/MetE-like_sf"/>
</dbReference>
<dbReference type="InterPro" id="IPR006361">
    <property type="entry name" value="Uroporphyrinogen_deCO2ase_HemE"/>
</dbReference>
<dbReference type="InterPro" id="IPR000257">
    <property type="entry name" value="Uroporphyrinogen_deCOase"/>
</dbReference>
<dbReference type="NCBIfam" id="TIGR01464">
    <property type="entry name" value="hemE"/>
    <property type="match status" value="1"/>
</dbReference>
<dbReference type="PANTHER" id="PTHR21091">
    <property type="entry name" value="METHYLTETRAHYDROFOLATE:HOMOCYSTEINE METHYLTRANSFERASE RELATED"/>
    <property type="match status" value="1"/>
</dbReference>
<dbReference type="PANTHER" id="PTHR21091:SF169">
    <property type="entry name" value="UROPORPHYRINOGEN DECARBOXYLASE"/>
    <property type="match status" value="1"/>
</dbReference>
<dbReference type="Pfam" id="PF01208">
    <property type="entry name" value="URO-D"/>
    <property type="match status" value="1"/>
</dbReference>
<dbReference type="SUPFAM" id="SSF51726">
    <property type="entry name" value="UROD/MetE-like"/>
    <property type="match status" value="1"/>
</dbReference>
<dbReference type="PROSITE" id="PS00906">
    <property type="entry name" value="UROD_1"/>
    <property type="match status" value="1"/>
</dbReference>
<dbReference type="PROSITE" id="PS00907">
    <property type="entry name" value="UROD_2"/>
    <property type="match status" value="1"/>
</dbReference>
<name>DCUP_BACAN</name>
<keyword id="KW-0963">Cytoplasm</keyword>
<keyword id="KW-0210">Decarboxylase</keyword>
<keyword id="KW-0456">Lyase</keyword>
<keyword id="KW-0627">Porphyrin biosynthesis</keyword>
<keyword id="KW-1185">Reference proteome</keyword>
<comment type="function">
    <text evidence="1">Catalyzes the decarboxylation of four acetate groups of uroporphyrinogen-III to yield coproporphyrinogen-III.</text>
</comment>
<comment type="catalytic activity">
    <reaction evidence="1">
        <text>uroporphyrinogen III + 4 H(+) = coproporphyrinogen III + 4 CO2</text>
        <dbReference type="Rhea" id="RHEA:19865"/>
        <dbReference type="ChEBI" id="CHEBI:15378"/>
        <dbReference type="ChEBI" id="CHEBI:16526"/>
        <dbReference type="ChEBI" id="CHEBI:57308"/>
        <dbReference type="ChEBI" id="CHEBI:57309"/>
        <dbReference type="EC" id="4.1.1.37"/>
    </reaction>
</comment>
<comment type="pathway">
    <text evidence="1">Porphyrin-containing compound metabolism; protoporphyrin-IX biosynthesis; coproporphyrinogen-III from 5-aminolevulinate: step 4/4.</text>
</comment>
<comment type="subunit">
    <text evidence="1">Homodimer.</text>
</comment>
<comment type="subcellular location">
    <subcellularLocation>
        <location evidence="1">Cytoplasm</location>
    </subcellularLocation>
</comment>
<comment type="similarity">
    <text evidence="1">Belongs to the uroporphyrinogen decarboxylase family.</text>
</comment>
<gene>
    <name evidence="1" type="primary">hemE</name>
    <name type="ordered locus">BA_1070</name>
    <name type="ordered locus">GBAA_1070</name>
    <name type="ordered locus">BAS0999</name>
</gene>
<organism>
    <name type="scientific">Bacillus anthracis</name>
    <dbReference type="NCBI Taxonomy" id="1392"/>
    <lineage>
        <taxon>Bacteria</taxon>
        <taxon>Bacillati</taxon>
        <taxon>Bacillota</taxon>
        <taxon>Bacilli</taxon>
        <taxon>Bacillales</taxon>
        <taxon>Bacillaceae</taxon>
        <taxon>Bacillus</taxon>
        <taxon>Bacillus cereus group</taxon>
    </lineage>
</organism>
<evidence type="ECO:0000255" key="1">
    <source>
        <dbReference type="HAMAP-Rule" id="MF_00218"/>
    </source>
</evidence>
<feature type="chain" id="PRO_0000187581" description="Uroporphyrinogen decarboxylase">
    <location>
        <begin position="1"/>
        <end position="348"/>
    </location>
</feature>
<feature type="binding site" evidence="1">
    <location>
        <begin position="27"/>
        <end position="31"/>
    </location>
    <ligand>
        <name>substrate</name>
    </ligand>
</feature>
<feature type="binding site" evidence="1">
    <location>
        <position position="46"/>
    </location>
    <ligand>
        <name>substrate</name>
    </ligand>
</feature>
<feature type="binding site" evidence="1">
    <location>
        <position position="76"/>
    </location>
    <ligand>
        <name>substrate</name>
    </ligand>
</feature>
<feature type="binding site" evidence="1">
    <location>
        <position position="152"/>
    </location>
    <ligand>
        <name>substrate</name>
    </ligand>
</feature>
<feature type="binding site" evidence="1">
    <location>
        <position position="207"/>
    </location>
    <ligand>
        <name>substrate</name>
    </ligand>
</feature>
<feature type="binding site" evidence="1">
    <location>
        <position position="320"/>
    </location>
    <ligand>
        <name>substrate</name>
    </ligand>
</feature>
<feature type="site" description="Transition state stabilizer" evidence="1">
    <location>
        <position position="76"/>
    </location>
</feature>
<protein>
    <recommendedName>
        <fullName evidence="1">Uroporphyrinogen decarboxylase</fullName>
        <shortName evidence="1">UPD</shortName>
        <shortName evidence="1">URO-D</shortName>
        <ecNumber evidence="1">4.1.1.37</ecNumber>
    </recommendedName>
</protein>